<keyword id="KW-0158">Chromosome</keyword>
<keyword id="KW-0238">DNA-binding</keyword>
<keyword id="KW-0544">Nucleosome core</keyword>
<keyword id="KW-0539">Nucleus</keyword>
<keyword id="KW-1185">Reference proteome</keyword>
<accession>Q9C944</accession>
<reference key="1">
    <citation type="journal article" date="2000" name="Nature">
        <title>Sequence and analysis of chromosome 1 of the plant Arabidopsis thaliana.</title>
        <authorList>
            <person name="Theologis A."/>
            <person name="Ecker J.R."/>
            <person name="Palm C.J."/>
            <person name="Federspiel N.A."/>
            <person name="Kaul S."/>
            <person name="White O."/>
            <person name="Alonso J."/>
            <person name="Altafi H."/>
            <person name="Araujo R."/>
            <person name="Bowman C.L."/>
            <person name="Brooks S.Y."/>
            <person name="Buehler E."/>
            <person name="Chan A."/>
            <person name="Chao Q."/>
            <person name="Chen H."/>
            <person name="Cheuk R.F."/>
            <person name="Chin C.W."/>
            <person name="Chung M.K."/>
            <person name="Conn L."/>
            <person name="Conway A.B."/>
            <person name="Conway A.R."/>
            <person name="Creasy T.H."/>
            <person name="Dewar K."/>
            <person name="Dunn P."/>
            <person name="Etgu P."/>
            <person name="Feldblyum T.V."/>
            <person name="Feng J.-D."/>
            <person name="Fong B."/>
            <person name="Fujii C.Y."/>
            <person name="Gill J.E."/>
            <person name="Goldsmith A.D."/>
            <person name="Haas B."/>
            <person name="Hansen N.F."/>
            <person name="Hughes B."/>
            <person name="Huizar L."/>
            <person name="Hunter J.L."/>
            <person name="Jenkins J."/>
            <person name="Johnson-Hopson C."/>
            <person name="Khan S."/>
            <person name="Khaykin E."/>
            <person name="Kim C.J."/>
            <person name="Koo H.L."/>
            <person name="Kremenetskaia I."/>
            <person name="Kurtz D.B."/>
            <person name="Kwan A."/>
            <person name="Lam B."/>
            <person name="Langin-Hooper S."/>
            <person name="Lee A."/>
            <person name="Lee J.M."/>
            <person name="Lenz C.A."/>
            <person name="Li J.H."/>
            <person name="Li Y.-P."/>
            <person name="Lin X."/>
            <person name="Liu S.X."/>
            <person name="Liu Z.A."/>
            <person name="Luros J.S."/>
            <person name="Maiti R."/>
            <person name="Marziali A."/>
            <person name="Militscher J."/>
            <person name="Miranda M."/>
            <person name="Nguyen M."/>
            <person name="Nierman W.C."/>
            <person name="Osborne B.I."/>
            <person name="Pai G."/>
            <person name="Peterson J."/>
            <person name="Pham P.K."/>
            <person name="Rizzo M."/>
            <person name="Rooney T."/>
            <person name="Rowley D."/>
            <person name="Sakano H."/>
            <person name="Salzberg S.L."/>
            <person name="Schwartz J.R."/>
            <person name="Shinn P."/>
            <person name="Southwick A.M."/>
            <person name="Sun H."/>
            <person name="Tallon L.J."/>
            <person name="Tambunga G."/>
            <person name="Toriumi M.J."/>
            <person name="Town C.D."/>
            <person name="Utterback T."/>
            <person name="Van Aken S."/>
            <person name="Vaysberg M."/>
            <person name="Vysotskaia V.S."/>
            <person name="Walker M."/>
            <person name="Wu D."/>
            <person name="Yu G."/>
            <person name="Fraser C.M."/>
            <person name="Venter J.C."/>
            <person name="Davis R.W."/>
        </authorList>
    </citation>
    <scope>NUCLEOTIDE SEQUENCE [LARGE SCALE GENOMIC DNA]</scope>
    <source>
        <strain>cv. Columbia</strain>
    </source>
</reference>
<reference key="2">
    <citation type="journal article" date="2017" name="Plant J.">
        <title>Araport11: a complete reannotation of the Arabidopsis thaliana reference genome.</title>
        <authorList>
            <person name="Cheng C.Y."/>
            <person name="Krishnakumar V."/>
            <person name="Chan A.P."/>
            <person name="Thibaud-Nissen F."/>
            <person name="Schobel S."/>
            <person name="Town C.D."/>
        </authorList>
    </citation>
    <scope>GENOME REANNOTATION</scope>
    <source>
        <strain>cv. Columbia</strain>
    </source>
</reference>
<reference key="3">
    <citation type="journal article" date="2003" name="Science">
        <title>Empirical analysis of transcriptional activity in the Arabidopsis genome.</title>
        <authorList>
            <person name="Yamada K."/>
            <person name="Lim J."/>
            <person name="Dale J.M."/>
            <person name="Chen H."/>
            <person name="Shinn P."/>
            <person name="Palm C.J."/>
            <person name="Southwick A.M."/>
            <person name="Wu H.C."/>
            <person name="Kim C.J."/>
            <person name="Nguyen M."/>
            <person name="Pham P.K."/>
            <person name="Cheuk R.F."/>
            <person name="Karlin-Newmann G."/>
            <person name="Liu S.X."/>
            <person name="Lam B."/>
            <person name="Sakano H."/>
            <person name="Wu T."/>
            <person name="Yu G."/>
            <person name="Miranda M."/>
            <person name="Quach H.L."/>
            <person name="Tripp M."/>
            <person name="Chang C.H."/>
            <person name="Lee J.M."/>
            <person name="Toriumi M.J."/>
            <person name="Chan M.M."/>
            <person name="Tang C.C."/>
            <person name="Onodera C.S."/>
            <person name="Deng J.M."/>
            <person name="Akiyama K."/>
            <person name="Ansari Y."/>
            <person name="Arakawa T."/>
            <person name="Banh J."/>
            <person name="Banno F."/>
            <person name="Bowser L."/>
            <person name="Brooks S.Y."/>
            <person name="Carninci P."/>
            <person name="Chao Q."/>
            <person name="Choy N."/>
            <person name="Enju A."/>
            <person name="Goldsmith A.D."/>
            <person name="Gurjal M."/>
            <person name="Hansen N.F."/>
            <person name="Hayashizaki Y."/>
            <person name="Johnson-Hopson C."/>
            <person name="Hsuan V.W."/>
            <person name="Iida K."/>
            <person name="Karnes M."/>
            <person name="Khan S."/>
            <person name="Koesema E."/>
            <person name="Ishida J."/>
            <person name="Jiang P.X."/>
            <person name="Jones T."/>
            <person name="Kawai J."/>
            <person name="Kamiya A."/>
            <person name="Meyers C."/>
            <person name="Nakajima M."/>
            <person name="Narusaka M."/>
            <person name="Seki M."/>
            <person name="Sakurai T."/>
            <person name="Satou M."/>
            <person name="Tamse R."/>
            <person name="Vaysberg M."/>
            <person name="Wallender E.K."/>
            <person name="Wong C."/>
            <person name="Yamamura Y."/>
            <person name="Yuan S."/>
            <person name="Shinozaki K."/>
            <person name="Davis R.W."/>
            <person name="Theologis A."/>
            <person name="Ecker J.R."/>
        </authorList>
    </citation>
    <scope>NUCLEOTIDE SEQUENCE [LARGE SCALE MRNA]</scope>
    <source>
        <strain>cv. Columbia</strain>
    </source>
</reference>
<reference key="4">
    <citation type="submission" date="2002-03" db="EMBL/GenBank/DDBJ databases">
        <title>Full-length cDNA from Arabidopsis thaliana.</title>
        <authorList>
            <person name="Brover V.V."/>
            <person name="Troukhan M.E."/>
            <person name="Alexandrov N.A."/>
            <person name="Lu Y.-P."/>
            <person name="Flavell R.B."/>
            <person name="Feldmann K.A."/>
        </authorList>
    </citation>
    <scope>NUCLEOTIDE SEQUENCE [LARGE SCALE MRNA]</scope>
</reference>
<reference key="5">
    <citation type="journal article" date="2006" name="Plant Cell">
        <title>Constitutive expression exposes functional redundancy between the Arabidopsis histone H2A gene HTA1 and other H2A gene family members.</title>
        <authorList>
            <person name="Yi H."/>
            <person name="Sardesai N."/>
            <person name="Fujinuma T."/>
            <person name="Chan C.-W."/>
            <person name="Veena X."/>
            <person name="Gelvin S.B."/>
        </authorList>
    </citation>
    <scope>NOMENCLATURE</scope>
</reference>
<organism>
    <name type="scientific">Arabidopsis thaliana</name>
    <name type="common">Mouse-ear cress</name>
    <dbReference type="NCBI Taxonomy" id="3702"/>
    <lineage>
        <taxon>Eukaryota</taxon>
        <taxon>Viridiplantae</taxon>
        <taxon>Streptophyta</taxon>
        <taxon>Embryophyta</taxon>
        <taxon>Tracheophyta</taxon>
        <taxon>Spermatophyta</taxon>
        <taxon>Magnoliopsida</taxon>
        <taxon>eudicotyledons</taxon>
        <taxon>Gunneridae</taxon>
        <taxon>Pentapetalae</taxon>
        <taxon>rosids</taxon>
        <taxon>malvids</taxon>
        <taxon>Brassicales</taxon>
        <taxon>Brassicaceae</taxon>
        <taxon>Camelineae</taxon>
        <taxon>Arabidopsis</taxon>
    </lineage>
</organism>
<gene>
    <name type="ordered locus">At1g52740</name>
    <name type="ORF">F14G24.1</name>
</gene>
<comment type="function">
    <text evidence="1">Variant histones H2A are synthesized throughout the cell cycle and are very different from classical S-phase regulated H2A. May replace conventional H2A in a subset of nucleosomes. Nucleosomes wrap and compact DNA into chromatin, limiting DNA accessibility to the cellular machineries which require DNA as a template. Histones thereby play a central role in transcription regulation, DNA repair, DNA replication and chromosomal stability. DNA accessibility is regulated via a complex set of post-translational modifications of histones, also called histone code, and nucleosome remodeling (By similarity).</text>
</comment>
<comment type="subunit">
    <text>The nucleosome is a histone octamer containing two molecules each of H2A, H2B, H3 and H4 assembled in one H3-H4 heterotetramer and two H2A-H2B heterodimers. The octamer wraps approximately 147 bp of DNA.</text>
</comment>
<comment type="interaction">
    <interactant intactId="EBI-1537419">
        <id>Q9C944</id>
    </interactant>
    <interactant intactId="EBI-979321">
        <id>Q39016</id>
        <label>CPK11</label>
    </interactant>
    <organismsDiffer>false</organismsDiffer>
    <experiments>9</experiments>
</comment>
<comment type="subcellular location">
    <subcellularLocation>
        <location evidence="1">Nucleus</location>
    </subcellularLocation>
    <subcellularLocation>
        <location evidence="1">Chromosome</location>
    </subcellularLocation>
</comment>
<comment type="similarity">
    <text evidence="3">Belongs to the histone H2A family.</text>
</comment>
<protein>
    <recommendedName>
        <fullName>Probable histone H2A variant 3</fullName>
    </recommendedName>
    <alternativeName>
        <fullName>H2A.F/Z 3</fullName>
    </alternativeName>
    <alternativeName>
        <fullName>HTA9</fullName>
    </alternativeName>
</protein>
<dbReference type="EMBL" id="AC019018">
    <property type="protein sequence ID" value="AAG52265.1"/>
    <property type="molecule type" value="Genomic_DNA"/>
</dbReference>
<dbReference type="EMBL" id="CP002684">
    <property type="protein sequence ID" value="AEE32847.1"/>
    <property type="molecule type" value="Genomic_DNA"/>
</dbReference>
<dbReference type="EMBL" id="AY054557">
    <property type="protein sequence ID" value="AAK96748.1"/>
    <property type="molecule type" value="mRNA"/>
</dbReference>
<dbReference type="EMBL" id="AY058147">
    <property type="protein sequence ID" value="AAL25563.1"/>
    <property type="molecule type" value="mRNA"/>
</dbReference>
<dbReference type="EMBL" id="AY084390">
    <property type="protein sequence ID" value="AAM60967.1"/>
    <property type="molecule type" value="mRNA"/>
</dbReference>
<dbReference type="EMBL" id="AY064631">
    <property type="protein sequence ID" value="AAL47344.1"/>
    <property type="molecule type" value="mRNA"/>
</dbReference>
<dbReference type="PIR" id="D96568">
    <property type="entry name" value="D96568"/>
</dbReference>
<dbReference type="RefSeq" id="NP_175683.1">
    <property type="nucleotide sequence ID" value="NM_104152.4"/>
</dbReference>
<dbReference type="SMR" id="Q9C944"/>
<dbReference type="BioGRID" id="26932">
    <property type="interactions" value="3"/>
</dbReference>
<dbReference type="FunCoup" id="Q9C944">
    <property type="interactions" value="4036"/>
</dbReference>
<dbReference type="IntAct" id="Q9C944">
    <property type="interactions" value="3"/>
</dbReference>
<dbReference type="STRING" id="3702.Q9C944"/>
<dbReference type="PaxDb" id="3702-AT1G52740.1"/>
<dbReference type="ProteomicsDB" id="230178"/>
<dbReference type="EnsemblPlants" id="AT1G52740.1">
    <property type="protein sequence ID" value="AT1G52740.1"/>
    <property type="gene ID" value="AT1G52740"/>
</dbReference>
<dbReference type="GeneID" id="841707"/>
<dbReference type="Gramene" id="AT1G52740.1">
    <property type="protein sequence ID" value="AT1G52740.1"/>
    <property type="gene ID" value="AT1G52740"/>
</dbReference>
<dbReference type="KEGG" id="ath:AT1G52740"/>
<dbReference type="Araport" id="AT1G52740"/>
<dbReference type="TAIR" id="AT1G52740">
    <property type="gene designation" value="HTA9"/>
</dbReference>
<dbReference type="eggNOG" id="KOG1757">
    <property type="taxonomic scope" value="Eukaryota"/>
</dbReference>
<dbReference type="HOGENOM" id="CLU_062828_2_4_1"/>
<dbReference type="InParanoid" id="Q9C944"/>
<dbReference type="OMA" id="GVHICFF"/>
<dbReference type="OrthoDB" id="9421954at2759"/>
<dbReference type="PhylomeDB" id="Q9C944"/>
<dbReference type="CD-CODE" id="4299E36E">
    <property type="entry name" value="Nucleolus"/>
</dbReference>
<dbReference type="PRO" id="PR:Q9C944"/>
<dbReference type="Proteomes" id="UP000006548">
    <property type="component" value="Chromosome 1"/>
</dbReference>
<dbReference type="ExpressionAtlas" id="Q9C944">
    <property type="expression patterns" value="baseline and differential"/>
</dbReference>
<dbReference type="GO" id="GO:0000786">
    <property type="term" value="C:nucleosome"/>
    <property type="evidence" value="ECO:0007669"/>
    <property type="project" value="UniProtKB-KW"/>
</dbReference>
<dbReference type="GO" id="GO:0005634">
    <property type="term" value="C:nucleus"/>
    <property type="evidence" value="ECO:0007005"/>
    <property type="project" value="TAIR"/>
</dbReference>
<dbReference type="GO" id="GO:0000325">
    <property type="term" value="C:plant-type vacuole"/>
    <property type="evidence" value="ECO:0007005"/>
    <property type="project" value="TAIR"/>
</dbReference>
<dbReference type="GO" id="GO:0003677">
    <property type="term" value="F:DNA binding"/>
    <property type="evidence" value="ECO:0007669"/>
    <property type="project" value="UniProtKB-KW"/>
</dbReference>
<dbReference type="GO" id="GO:0046982">
    <property type="term" value="F:protein heterodimerization activity"/>
    <property type="evidence" value="ECO:0007669"/>
    <property type="project" value="InterPro"/>
</dbReference>
<dbReference type="GO" id="GO:0030527">
    <property type="term" value="F:structural constituent of chromatin"/>
    <property type="evidence" value="ECO:0007669"/>
    <property type="project" value="InterPro"/>
</dbReference>
<dbReference type="GO" id="GO:0010468">
    <property type="term" value="P:regulation of gene expression"/>
    <property type="evidence" value="ECO:0000316"/>
    <property type="project" value="TAIR"/>
</dbReference>
<dbReference type="GO" id="GO:0009266">
    <property type="term" value="P:response to temperature stimulus"/>
    <property type="evidence" value="ECO:0000316"/>
    <property type="project" value="TAIR"/>
</dbReference>
<dbReference type="CDD" id="cd00074">
    <property type="entry name" value="HFD_H2A"/>
    <property type="match status" value="1"/>
</dbReference>
<dbReference type="FunFam" id="1.10.20.10:FF:000005">
    <property type="entry name" value="Histone H2A"/>
    <property type="match status" value="1"/>
</dbReference>
<dbReference type="Gene3D" id="1.10.20.10">
    <property type="entry name" value="Histone, subunit A"/>
    <property type="match status" value="1"/>
</dbReference>
<dbReference type="InterPro" id="IPR009072">
    <property type="entry name" value="Histone-fold"/>
</dbReference>
<dbReference type="InterPro" id="IPR002119">
    <property type="entry name" value="Histone_H2A"/>
</dbReference>
<dbReference type="InterPro" id="IPR007125">
    <property type="entry name" value="Histone_H2A/H2B/H3"/>
</dbReference>
<dbReference type="InterPro" id="IPR032454">
    <property type="entry name" value="Histone_H2A_C"/>
</dbReference>
<dbReference type="InterPro" id="IPR032458">
    <property type="entry name" value="Histone_H2A_CS"/>
</dbReference>
<dbReference type="PANTHER" id="PTHR23430">
    <property type="entry name" value="HISTONE H2A"/>
    <property type="match status" value="1"/>
</dbReference>
<dbReference type="Pfam" id="PF00125">
    <property type="entry name" value="Histone"/>
    <property type="match status" value="1"/>
</dbReference>
<dbReference type="Pfam" id="PF16211">
    <property type="entry name" value="Histone_H2A_C"/>
    <property type="match status" value="1"/>
</dbReference>
<dbReference type="PRINTS" id="PR00620">
    <property type="entry name" value="HISTONEH2A"/>
</dbReference>
<dbReference type="SMART" id="SM00414">
    <property type="entry name" value="H2A"/>
    <property type="match status" value="1"/>
</dbReference>
<dbReference type="SUPFAM" id="SSF47113">
    <property type="entry name" value="Histone-fold"/>
    <property type="match status" value="1"/>
</dbReference>
<dbReference type="PROSITE" id="PS00046">
    <property type="entry name" value="HISTONE_H2A"/>
    <property type="match status" value="1"/>
</dbReference>
<proteinExistence type="evidence at protein level"/>
<evidence type="ECO:0000250" key="1"/>
<evidence type="ECO:0000256" key="2">
    <source>
        <dbReference type="SAM" id="MobiDB-lite"/>
    </source>
</evidence>
<evidence type="ECO:0000305" key="3"/>
<sequence>MSGKGAKGLIMGKPSGSDKDKDKKKPITRSSRAGLQFPVGRVHRLLKTRSTAHGRVGATAAVYTAAILEYLTAEVLELAGNASKDLKVKRISPRHLQLAIRGDEELDTLIKGTIAGGGVIPHIHKSLINKSAKE</sequence>
<feature type="chain" id="PRO_0000055314" description="Probable histone H2A variant 3">
    <location>
        <begin position="1"/>
        <end position="134"/>
    </location>
</feature>
<feature type="region of interest" description="Disordered" evidence="2">
    <location>
        <begin position="1"/>
        <end position="33"/>
    </location>
</feature>
<feature type="compositionally biased region" description="Basic and acidic residues" evidence="2">
    <location>
        <begin position="16"/>
        <end position="25"/>
    </location>
</feature>
<name>H2AV3_ARATH</name>